<keyword id="KW-0903">Direct protein sequencing</keyword>
<keyword id="KW-0964">Secreted</keyword>
<keyword id="KW-0732">Signal</keyword>
<name>IMSP3_RUDPH</name>
<proteinExistence type="evidence at protein level"/>
<organism>
    <name type="scientific">Ruditapes philippinarum</name>
    <name type="common">Japanese carpet shell</name>
    <name type="synonym">Venerupis philippinarum</name>
    <dbReference type="NCBI Taxonomy" id="129788"/>
    <lineage>
        <taxon>Eukaryota</taxon>
        <taxon>Metazoa</taxon>
        <taxon>Spiralia</taxon>
        <taxon>Lophotrochozoa</taxon>
        <taxon>Mollusca</taxon>
        <taxon>Bivalvia</taxon>
        <taxon>Autobranchia</taxon>
        <taxon>Heteroconchia</taxon>
        <taxon>Euheterodonta</taxon>
        <taxon>Imparidentia</taxon>
        <taxon>Neoheterodontei</taxon>
        <taxon>Venerida</taxon>
        <taxon>Veneroidea</taxon>
        <taxon>Veneridae</taxon>
        <taxon>Ruditapes</taxon>
    </lineage>
</organism>
<feature type="signal peptide" evidence="1">
    <location>
        <begin position="1"/>
        <end position="19"/>
    </location>
</feature>
<feature type="chain" id="PRO_0000413027" description="Insoluble matrix shell protein 3" evidence="1">
    <location>
        <begin position="20"/>
        <end position="128"/>
    </location>
</feature>
<protein>
    <recommendedName>
        <fullName evidence="3">Insoluble matrix shell protein 3</fullName>
        <shortName evidence="3">IMSP3</shortName>
    </recommendedName>
</protein>
<reference evidence="4" key="1">
    <citation type="submission" date="2007-09" db="EMBL/GenBank/DDBJ databases">
        <authorList>
            <person name="Beck A."/>
        </authorList>
    </citation>
    <scope>NUCLEOTIDE SEQUENCE [MRNA]</scope>
</reference>
<reference evidence="4" key="2">
    <citation type="journal article" date="2011" name="Mar. Biotechnol.">
        <title>Proteomic identification of novel proteins from the calcifying shell matrix of the manila clam Venerupis Philippinarum.</title>
        <authorList>
            <person name="Marie B."/>
            <person name="Trinkler N."/>
            <person name="Zanella-Cleon I."/>
            <person name="Guichard N."/>
            <person name="Becchi M."/>
            <person name="Paillard C."/>
            <person name="Marin F."/>
        </authorList>
    </citation>
    <scope>PROTEIN SEQUENCE OF 45-55 AND 90-105</scope>
    <source>
        <tissue evidence="2">Shell</tissue>
    </source>
</reference>
<accession>P86984</accession>
<comment type="subcellular location">
    <subcellularLocation>
        <location evidence="2">Secreted</location>
    </subcellularLocation>
</comment>
<comment type="tissue specificity">
    <text evidence="2">Component of the acid-insoluble organic matrix of the calcified shell.</text>
</comment>
<evidence type="ECO:0000255" key="1"/>
<evidence type="ECO:0000269" key="2">
    <source>
    </source>
</evidence>
<evidence type="ECO:0000303" key="3">
    <source>
    </source>
</evidence>
<evidence type="ECO:0000305" key="4"/>
<dbReference type="EMBL" id="AM872695">
    <property type="status" value="NOT_ANNOTATED_CDS"/>
    <property type="molecule type" value="mRNA"/>
</dbReference>
<dbReference type="GO" id="GO:0005576">
    <property type="term" value="C:extracellular region"/>
    <property type="evidence" value="ECO:0007669"/>
    <property type="project" value="UniProtKB-SubCell"/>
</dbReference>
<sequence>MLMLLCIIATVIPFSLVEGRKGCWADPTPPGKECLYGKEIHGGRNLGIHYIFTSKFTRICCQALECQYWGLCRFKDVWCGQSVSGVPIKANALLWGQRDVEPIMRCYDSRGAGAYYSFTVQVVPIEDR</sequence>